<gene>
    <name evidence="1" type="primary">serS</name>
    <name type="ordered locus">Sbal_2160</name>
</gene>
<dbReference type="EC" id="6.1.1.11" evidence="1"/>
<dbReference type="EMBL" id="CP000563">
    <property type="protein sequence ID" value="ABN61657.1"/>
    <property type="molecule type" value="Genomic_DNA"/>
</dbReference>
<dbReference type="RefSeq" id="WP_011846840.1">
    <property type="nucleotide sequence ID" value="NC_009052.1"/>
</dbReference>
<dbReference type="SMR" id="A3D4J4"/>
<dbReference type="STRING" id="325240.Sbal_2160"/>
<dbReference type="KEGG" id="sbl:Sbal_2160"/>
<dbReference type="HOGENOM" id="CLU_023797_1_1_6"/>
<dbReference type="OrthoDB" id="9804647at2"/>
<dbReference type="UniPathway" id="UPA00906">
    <property type="reaction ID" value="UER00895"/>
</dbReference>
<dbReference type="Proteomes" id="UP000001557">
    <property type="component" value="Chromosome"/>
</dbReference>
<dbReference type="GO" id="GO:0005737">
    <property type="term" value="C:cytoplasm"/>
    <property type="evidence" value="ECO:0007669"/>
    <property type="project" value="UniProtKB-SubCell"/>
</dbReference>
<dbReference type="GO" id="GO:0005524">
    <property type="term" value="F:ATP binding"/>
    <property type="evidence" value="ECO:0007669"/>
    <property type="project" value="UniProtKB-UniRule"/>
</dbReference>
<dbReference type="GO" id="GO:0004828">
    <property type="term" value="F:serine-tRNA ligase activity"/>
    <property type="evidence" value="ECO:0007669"/>
    <property type="project" value="UniProtKB-UniRule"/>
</dbReference>
<dbReference type="GO" id="GO:0016260">
    <property type="term" value="P:selenocysteine biosynthetic process"/>
    <property type="evidence" value="ECO:0007669"/>
    <property type="project" value="UniProtKB-UniRule"/>
</dbReference>
<dbReference type="GO" id="GO:0006434">
    <property type="term" value="P:seryl-tRNA aminoacylation"/>
    <property type="evidence" value="ECO:0007669"/>
    <property type="project" value="UniProtKB-UniRule"/>
</dbReference>
<dbReference type="CDD" id="cd00770">
    <property type="entry name" value="SerRS_core"/>
    <property type="match status" value="1"/>
</dbReference>
<dbReference type="Gene3D" id="3.30.930.10">
    <property type="entry name" value="Bira Bifunctional Protein, Domain 2"/>
    <property type="match status" value="1"/>
</dbReference>
<dbReference type="Gene3D" id="1.10.287.40">
    <property type="entry name" value="Serine-tRNA synthetase, tRNA binding domain"/>
    <property type="match status" value="1"/>
</dbReference>
<dbReference type="HAMAP" id="MF_00176">
    <property type="entry name" value="Ser_tRNA_synth_type1"/>
    <property type="match status" value="1"/>
</dbReference>
<dbReference type="InterPro" id="IPR002314">
    <property type="entry name" value="aa-tRNA-synt_IIb"/>
</dbReference>
<dbReference type="InterPro" id="IPR006195">
    <property type="entry name" value="aa-tRNA-synth_II"/>
</dbReference>
<dbReference type="InterPro" id="IPR045864">
    <property type="entry name" value="aa-tRNA-synth_II/BPL/LPL"/>
</dbReference>
<dbReference type="InterPro" id="IPR002317">
    <property type="entry name" value="Ser-tRNA-ligase_type_1"/>
</dbReference>
<dbReference type="InterPro" id="IPR015866">
    <property type="entry name" value="Ser-tRNA-synth_1_N"/>
</dbReference>
<dbReference type="InterPro" id="IPR042103">
    <property type="entry name" value="SerRS_1_N_sf"/>
</dbReference>
<dbReference type="InterPro" id="IPR033729">
    <property type="entry name" value="SerRS_core"/>
</dbReference>
<dbReference type="InterPro" id="IPR010978">
    <property type="entry name" value="tRNA-bd_arm"/>
</dbReference>
<dbReference type="NCBIfam" id="TIGR00414">
    <property type="entry name" value="serS"/>
    <property type="match status" value="1"/>
</dbReference>
<dbReference type="PANTHER" id="PTHR43697:SF1">
    <property type="entry name" value="SERINE--TRNA LIGASE"/>
    <property type="match status" value="1"/>
</dbReference>
<dbReference type="PANTHER" id="PTHR43697">
    <property type="entry name" value="SERYL-TRNA SYNTHETASE"/>
    <property type="match status" value="1"/>
</dbReference>
<dbReference type="Pfam" id="PF02403">
    <property type="entry name" value="Seryl_tRNA_N"/>
    <property type="match status" value="1"/>
</dbReference>
<dbReference type="Pfam" id="PF00587">
    <property type="entry name" value="tRNA-synt_2b"/>
    <property type="match status" value="1"/>
</dbReference>
<dbReference type="PIRSF" id="PIRSF001529">
    <property type="entry name" value="Ser-tRNA-synth_IIa"/>
    <property type="match status" value="1"/>
</dbReference>
<dbReference type="PRINTS" id="PR00981">
    <property type="entry name" value="TRNASYNTHSER"/>
</dbReference>
<dbReference type="SUPFAM" id="SSF55681">
    <property type="entry name" value="Class II aaRS and biotin synthetases"/>
    <property type="match status" value="1"/>
</dbReference>
<dbReference type="SUPFAM" id="SSF46589">
    <property type="entry name" value="tRNA-binding arm"/>
    <property type="match status" value="1"/>
</dbReference>
<dbReference type="PROSITE" id="PS50862">
    <property type="entry name" value="AA_TRNA_LIGASE_II"/>
    <property type="match status" value="1"/>
</dbReference>
<proteinExistence type="inferred from homology"/>
<protein>
    <recommendedName>
        <fullName evidence="1">Serine--tRNA ligase</fullName>
        <ecNumber evidence="1">6.1.1.11</ecNumber>
    </recommendedName>
    <alternativeName>
        <fullName evidence="1">Seryl-tRNA synthetase</fullName>
        <shortName evidence="1">SerRS</shortName>
    </alternativeName>
    <alternativeName>
        <fullName evidence="1">Seryl-tRNA(Ser/Sec) synthetase</fullName>
    </alternativeName>
</protein>
<comment type="function">
    <text evidence="1">Catalyzes the attachment of serine to tRNA(Ser). Is also able to aminoacylate tRNA(Sec) with serine, to form the misacylated tRNA L-seryl-tRNA(Sec), which will be further converted into selenocysteinyl-tRNA(Sec).</text>
</comment>
<comment type="catalytic activity">
    <reaction evidence="1">
        <text>tRNA(Ser) + L-serine + ATP = L-seryl-tRNA(Ser) + AMP + diphosphate + H(+)</text>
        <dbReference type="Rhea" id="RHEA:12292"/>
        <dbReference type="Rhea" id="RHEA-COMP:9669"/>
        <dbReference type="Rhea" id="RHEA-COMP:9703"/>
        <dbReference type="ChEBI" id="CHEBI:15378"/>
        <dbReference type="ChEBI" id="CHEBI:30616"/>
        <dbReference type="ChEBI" id="CHEBI:33019"/>
        <dbReference type="ChEBI" id="CHEBI:33384"/>
        <dbReference type="ChEBI" id="CHEBI:78442"/>
        <dbReference type="ChEBI" id="CHEBI:78533"/>
        <dbReference type="ChEBI" id="CHEBI:456215"/>
        <dbReference type="EC" id="6.1.1.11"/>
    </reaction>
</comment>
<comment type="catalytic activity">
    <reaction evidence="1">
        <text>tRNA(Sec) + L-serine + ATP = L-seryl-tRNA(Sec) + AMP + diphosphate + H(+)</text>
        <dbReference type="Rhea" id="RHEA:42580"/>
        <dbReference type="Rhea" id="RHEA-COMP:9742"/>
        <dbReference type="Rhea" id="RHEA-COMP:10128"/>
        <dbReference type="ChEBI" id="CHEBI:15378"/>
        <dbReference type="ChEBI" id="CHEBI:30616"/>
        <dbReference type="ChEBI" id="CHEBI:33019"/>
        <dbReference type="ChEBI" id="CHEBI:33384"/>
        <dbReference type="ChEBI" id="CHEBI:78442"/>
        <dbReference type="ChEBI" id="CHEBI:78533"/>
        <dbReference type="ChEBI" id="CHEBI:456215"/>
        <dbReference type="EC" id="6.1.1.11"/>
    </reaction>
</comment>
<comment type="pathway">
    <text evidence="1">Aminoacyl-tRNA biosynthesis; selenocysteinyl-tRNA(Sec) biosynthesis; L-seryl-tRNA(Sec) from L-serine and tRNA(Sec): step 1/1.</text>
</comment>
<comment type="subunit">
    <text evidence="1">Homodimer. The tRNA molecule binds across the dimer.</text>
</comment>
<comment type="subcellular location">
    <subcellularLocation>
        <location evidence="1">Cytoplasm</location>
    </subcellularLocation>
</comment>
<comment type="domain">
    <text evidence="1">Consists of two distinct domains, a catalytic core and a N-terminal extension that is involved in tRNA binding.</text>
</comment>
<comment type="similarity">
    <text evidence="1">Belongs to the class-II aminoacyl-tRNA synthetase family. Type-1 seryl-tRNA synthetase subfamily.</text>
</comment>
<accession>A3D4J4</accession>
<evidence type="ECO:0000255" key="1">
    <source>
        <dbReference type="HAMAP-Rule" id="MF_00176"/>
    </source>
</evidence>
<feature type="chain" id="PRO_1000019809" description="Serine--tRNA ligase">
    <location>
        <begin position="1"/>
        <end position="428"/>
    </location>
</feature>
<feature type="binding site" evidence="1">
    <location>
        <begin position="235"/>
        <end position="237"/>
    </location>
    <ligand>
        <name>L-serine</name>
        <dbReference type="ChEBI" id="CHEBI:33384"/>
    </ligand>
</feature>
<feature type="binding site" evidence="1">
    <location>
        <begin position="266"/>
        <end position="268"/>
    </location>
    <ligand>
        <name>ATP</name>
        <dbReference type="ChEBI" id="CHEBI:30616"/>
    </ligand>
</feature>
<feature type="binding site" evidence="1">
    <location>
        <position position="289"/>
    </location>
    <ligand>
        <name>L-serine</name>
        <dbReference type="ChEBI" id="CHEBI:33384"/>
    </ligand>
</feature>
<feature type="binding site" evidence="1">
    <location>
        <begin position="353"/>
        <end position="356"/>
    </location>
    <ligand>
        <name>ATP</name>
        <dbReference type="ChEBI" id="CHEBI:30616"/>
    </ligand>
</feature>
<feature type="binding site" evidence="1">
    <location>
        <position position="389"/>
    </location>
    <ligand>
        <name>L-serine</name>
        <dbReference type="ChEBI" id="CHEBI:33384"/>
    </ligand>
</feature>
<keyword id="KW-0030">Aminoacyl-tRNA synthetase</keyword>
<keyword id="KW-0067">ATP-binding</keyword>
<keyword id="KW-0963">Cytoplasm</keyword>
<keyword id="KW-0436">Ligase</keyword>
<keyword id="KW-0547">Nucleotide-binding</keyword>
<keyword id="KW-0648">Protein biosynthesis</keyword>
<keyword id="KW-1185">Reference proteome</keyword>
<organism>
    <name type="scientific">Shewanella baltica (strain OS155 / ATCC BAA-1091)</name>
    <dbReference type="NCBI Taxonomy" id="325240"/>
    <lineage>
        <taxon>Bacteria</taxon>
        <taxon>Pseudomonadati</taxon>
        <taxon>Pseudomonadota</taxon>
        <taxon>Gammaproteobacteria</taxon>
        <taxon>Alteromonadales</taxon>
        <taxon>Shewanellaceae</taxon>
        <taxon>Shewanella</taxon>
    </lineage>
</organism>
<sequence>MLDPKFLRNELEVTAERLATRGFILDIAHLTQLEEKRKSLQVATEELQASRNAISKSIGQAKARGEDVDAIMAQVGDLGSQLDAKKIELAAVLEEVNAIAMSMPNLPDESAPIGADETENVEVRRWGTPRTFDFPIKDHIDLGEGLNGLDFKNAVKITGSRFIVMKGQVARLNRAIGQFMLDLHTTEHGYTEAYVPLLVNEASLLGTGQLPKFGEDLFHTKPATEEGQGLSLIPTAEVPLTNLVRDSIVDEDELPIKLTAHTACFRSEAGSYGKDTRGLIRQHQFDKVEMVQIVKPEDSMAALEALTGHAETVLQRLGLPYRTVILCTGDMGFGSSKTYDIEVWLPAQNTYREISSCSNMKDFQARRMQARYRVKADNKPALLHTLNGSGLAVGRTLVAILENYQNADGSITIPEVLRPYMGGLTKIG</sequence>
<reference key="1">
    <citation type="submission" date="2007-02" db="EMBL/GenBank/DDBJ databases">
        <title>Complete sequence of chromosome of Shewanella baltica OS155.</title>
        <authorList>
            <consortium name="US DOE Joint Genome Institute"/>
            <person name="Copeland A."/>
            <person name="Lucas S."/>
            <person name="Lapidus A."/>
            <person name="Barry K."/>
            <person name="Detter J.C."/>
            <person name="Glavina del Rio T."/>
            <person name="Hammon N."/>
            <person name="Israni S."/>
            <person name="Dalin E."/>
            <person name="Tice H."/>
            <person name="Pitluck S."/>
            <person name="Sims D.R."/>
            <person name="Brettin T."/>
            <person name="Bruce D."/>
            <person name="Han C."/>
            <person name="Tapia R."/>
            <person name="Brainard J."/>
            <person name="Schmutz J."/>
            <person name="Larimer F."/>
            <person name="Land M."/>
            <person name="Hauser L."/>
            <person name="Kyrpides N."/>
            <person name="Mikhailova N."/>
            <person name="Brettar I."/>
            <person name="Klappenbach J."/>
            <person name="Konstantinidis K."/>
            <person name="Rodrigues J."/>
            <person name="Tiedje J."/>
            <person name="Richardson P."/>
        </authorList>
    </citation>
    <scope>NUCLEOTIDE SEQUENCE [LARGE SCALE GENOMIC DNA]</scope>
    <source>
        <strain>OS155 / ATCC BAA-1091</strain>
    </source>
</reference>
<name>SYS_SHEB5</name>